<keyword id="KW-0687">Ribonucleoprotein</keyword>
<keyword id="KW-0689">Ribosomal protein</keyword>
<keyword id="KW-0694">RNA-binding</keyword>
<keyword id="KW-0699">rRNA-binding</keyword>
<sequence>MSQIDIYNIQNEKVGTLDIKDEIFNIDPNMDVLYRYVDMQLTNKRAGTASTKTRSEVSGGGRKPWPQKHTGRARAGSIRSPLFRHGGVTFGPKPREFHKDLNKKMKRLALKSALSVRYRENNLIVLDEVKFEKPRTKDVKNILSKFGMEDTKVLFLFPYHQEQYENFKLSARNLPKVKVIIADNPGQNKKNVDGLNVFDLINSEKIVLTKEMVNKIEEVIG</sequence>
<feature type="chain" id="PRO_1000086529" description="Large ribosomal subunit protein uL4">
    <location>
        <begin position="1"/>
        <end position="221"/>
    </location>
</feature>
<feature type="region of interest" description="Disordered" evidence="2">
    <location>
        <begin position="46"/>
        <end position="74"/>
    </location>
</feature>
<accession>A9BHA4</accession>
<reference key="1">
    <citation type="submission" date="2007-11" db="EMBL/GenBank/DDBJ databases">
        <title>Complete sequence of Petroga mobilis SJ95.</title>
        <authorList>
            <consortium name="US DOE Joint Genome Institute"/>
            <person name="Copeland A."/>
            <person name="Lucas S."/>
            <person name="Lapidus A."/>
            <person name="Barry K."/>
            <person name="Glavina del Rio T."/>
            <person name="Dalin E."/>
            <person name="Tice H."/>
            <person name="Pitluck S."/>
            <person name="Meincke L."/>
            <person name="Brettin T."/>
            <person name="Bruce D."/>
            <person name="Detter J.C."/>
            <person name="Han C."/>
            <person name="Kuske C.R."/>
            <person name="Schmutz J."/>
            <person name="Larimer F."/>
            <person name="Land M."/>
            <person name="Hauser L."/>
            <person name="Kyrpides N."/>
            <person name="Mikhailova N."/>
            <person name="Noll K."/>
            <person name="Richardson P."/>
        </authorList>
    </citation>
    <scope>NUCLEOTIDE SEQUENCE [LARGE SCALE GENOMIC DNA]</scope>
    <source>
        <strain>DSM 10674 / SJ95</strain>
    </source>
</reference>
<proteinExistence type="inferred from homology"/>
<protein>
    <recommendedName>
        <fullName evidence="1">Large ribosomal subunit protein uL4</fullName>
    </recommendedName>
    <alternativeName>
        <fullName evidence="3">50S ribosomal protein L4</fullName>
    </alternativeName>
</protein>
<dbReference type="EMBL" id="CP000879">
    <property type="protein sequence ID" value="ABX31513.1"/>
    <property type="molecule type" value="Genomic_DNA"/>
</dbReference>
<dbReference type="RefSeq" id="WP_012208616.1">
    <property type="nucleotide sequence ID" value="NC_010003.1"/>
</dbReference>
<dbReference type="SMR" id="A9BHA4"/>
<dbReference type="STRING" id="403833.Pmob_0789"/>
<dbReference type="KEGG" id="pmo:Pmob_0789"/>
<dbReference type="eggNOG" id="COG0088">
    <property type="taxonomic scope" value="Bacteria"/>
</dbReference>
<dbReference type="HOGENOM" id="CLU_041575_5_2_0"/>
<dbReference type="OrthoDB" id="9803201at2"/>
<dbReference type="Proteomes" id="UP000000789">
    <property type="component" value="Chromosome"/>
</dbReference>
<dbReference type="GO" id="GO:1990904">
    <property type="term" value="C:ribonucleoprotein complex"/>
    <property type="evidence" value="ECO:0007669"/>
    <property type="project" value="UniProtKB-KW"/>
</dbReference>
<dbReference type="GO" id="GO:0005840">
    <property type="term" value="C:ribosome"/>
    <property type="evidence" value="ECO:0007669"/>
    <property type="project" value="UniProtKB-KW"/>
</dbReference>
<dbReference type="GO" id="GO:0019843">
    <property type="term" value="F:rRNA binding"/>
    <property type="evidence" value="ECO:0007669"/>
    <property type="project" value="UniProtKB-UniRule"/>
</dbReference>
<dbReference type="GO" id="GO:0003735">
    <property type="term" value="F:structural constituent of ribosome"/>
    <property type="evidence" value="ECO:0007669"/>
    <property type="project" value="InterPro"/>
</dbReference>
<dbReference type="GO" id="GO:0006412">
    <property type="term" value="P:translation"/>
    <property type="evidence" value="ECO:0007669"/>
    <property type="project" value="UniProtKB-UniRule"/>
</dbReference>
<dbReference type="Gene3D" id="3.40.1370.10">
    <property type="match status" value="1"/>
</dbReference>
<dbReference type="HAMAP" id="MF_01328_B">
    <property type="entry name" value="Ribosomal_uL4_B"/>
    <property type="match status" value="1"/>
</dbReference>
<dbReference type="InterPro" id="IPR002136">
    <property type="entry name" value="Ribosomal_uL4"/>
</dbReference>
<dbReference type="InterPro" id="IPR013005">
    <property type="entry name" value="Ribosomal_uL4-like"/>
</dbReference>
<dbReference type="InterPro" id="IPR023574">
    <property type="entry name" value="Ribosomal_uL4_dom_sf"/>
</dbReference>
<dbReference type="NCBIfam" id="TIGR03953">
    <property type="entry name" value="rplD_bact"/>
    <property type="match status" value="1"/>
</dbReference>
<dbReference type="PANTHER" id="PTHR10746">
    <property type="entry name" value="50S RIBOSOMAL PROTEIN L4"/>
    <property type="match status" value="1"/>
</dbReference>
<dbReference type="PANTHER" id="PTHR10746:SF6">
    <property type="entry name" value="LARGE RIBOSOMAL SUBUNIT PROTEIN UL4M"/>
    <property type="match status" value="1"/>
</dbReference>
<dbReference type="Pfam" id="PF00573">
    <property type="entry name" value="Ribosomal_L4"/>
    <property type="match status" value="1"/>
</dbReference>
<dbReference type="SUPFAM" id="SSF52166">
    <property type="entry name" value="Ribosomal protein L4"/>
    <property type="match status" value="1"/>
</dbReference>
<evidence type="ECO:0000255" key="1">
    <source>
        <dbReference type="HAMAP-Rule" id="MF_01328"/>
    </source>
</evidence>
<evidence type="ECO:0000256" key="2">
    <source>
        <dbReference type="SAM" id="MobiDB-lite"/>
    </source>
</evidence>
<evidence type="ECO:0000305" key="3"/>
<organism>
    <name type="scientific">Petrotoga mobilis (strain DSM 10674 / SJ95)</name>
    <dbReference type="NCBI Taxonomy" id="403833"/>
    <lineage>
        <taxon>Bacteria</taxon>
        <taxon>Thermotogati</taxon>
        <taxon>Thermotogota</taxon>
        <taxon>Thermotogae</taxon>
        <taxon>Petrotogales</taxon>
        <taxon>Petrotogaceae</taxon>
        <taxon>Petrotoga</taxon>
    </lineage>
</organism>
<comment type="function">
    <text evidence="1">One of the primary rRNA binding proteins, this protein initially binds near the 5'-end of the 23S rRNA. It is important during the early stages of 50S assembly. It makes multiple contacts with different domains of the 23S rRNA in the assembled 50S subunit and ribosome.</text>
</comment>
<comment type="function">
    <text evidence="1">Forms part of the polypeptide exit tunnel.</text>
</comment>
<comment type="subunit">
    <text evidence="1">Part of the 50S ribosomal subunit.</text>
</comment>
<comment type="similarity">
    <text evidence="1">Belongs to the universal ribosomal protein uL4 family.</text>
</comment>
<gene>
    <name evidence="1" type="primary">rplD</name>
    <name type="ordered locus">Pmob_0789</name>
</gene>
<name>RL4_PETMO</name>